<sequence length="164" mass="17057">MAFKDNAVELEERVVAVNRVTKVVKGGRRLRFAALVVVGDHNGRVGFGTGKAQEVPEAIRKAVDDAKKNLIEVPMVGTTIPHEVLSEFGGAKVLLKPAVEGSGVAAGGAVRAVVELAGVADITSKSLGSNTPINIVRATVEGLKQLKRAEEIAALRGISVSDLA</sequence>
<dbReference type="EMBL" id="AE005672">
    <property type="protein sequence ID" value="AAK74407.1"/>
    <property type="molecule type" value="Genomic_DNA"/>
</dbReference>
<dbReference type="PIR" id="F95026">
    <property type="entry name" value="F95026"/>
</dbReference>
<dbReference type="RefSeq" id="WP_000874201.1">
    <property type="nucleotide sequence ID" value="NZ_CP155539.1"/>
</dbReference>
<dbReference type="SMR" id="P66581"/>
<dbReference type="PaxDb" id="170187-SP_0227"/>
<dbReference type="EnsemblBacteria" id="AAK74407">
    <property type="protein sequence ID" value="AAK74407"/>
    <property type="gene ID" value="SP_0227"/>
</dbReference>
<dbReference type="GeneID" id="45652292"/>
<dbReference type="KEGG" id="spn:SP_0227"/>
<dbReference type="eggNOG" id="COG0098">
    <property type="taxonomic scope" value="Bacteria"/>
</dbReference>
<dbReference type="PhylomeDB" id="P66581"/>
<dbReference type="BioCyc" id="SPNE170187:G1FZB-231-MONOMER"/>
<dbReference type="Proteomes" id="UP000000585">
    <property type="component" value="Chromosome"/>
</dbReference>
<dbReference type="GO" id="GO:0015935">
    <property type="term" value="C:small ribosomal subunit"/>
    <property type="evidence" value="ECO:0007669"/>
    <property type="project" value="InterPro"/>
</dbReference>
<dbReference type="GO" id="GO:0019843">
    <property type="term" value="F:rRNA binding"/>
    <property type="evidence" value="ECO:0007669"/>
    <property type="project" value="UniProtKB-UniRule"/>
</dbReference>
<dbReference type="GO" id="GO:0003735">
    <property type="term" value="F:structural constituent of ribosome"/>
    <property type="evidence" value="ECO:0007669"/>
    <property type="project" value="InterPro"/>
</dbReference>
<dbReference type="GO" id="GO:0006412">
    <property type="term" value="P:translation"/>
    <property type="evidence" value="ECO:0007669"/>
    <property type="project" value="UniProtKB-UniRule"/>
</dbReference>
<dbReference type="FunFam" id="3.30.160.20:FF:000001">
    <property type="entry name" value="30S ribosomal protein S5"/>
    <property type="match status" value="1"/>
</dbReference>
<dbReference type="FunFam" id="3.30.230.10:FF:000002">
    <property type="entry name" value="30S ribosomal protein S5"/>
    <property type="match status" value="1"/>
</dbReference>
<dbReference type="Gene3D" id="3.30.160.20">
    <property type="match status" value="1"/>
</dbReference>
<dbReference type="Gene3D" id="3.30.230.10">
    <property type="match status" value="1"/>
</dbReference>
<dbReference type="HAMAP" id="MF_01307_B">
    <property type="entry name" value="Ribosomal_uS5_B"/>
    <property type="match status" value="1"/>
</dbReference>
<dbReference type="InterPro" id="IPR020568">
    <property type="entry name" value="Ribosomal_Su5_D2-typ_SF"/>
</dbReference>
<dbReference type="InterPro" id="IPR000851">
    <property type="entry name" value="Ribosomal_uS5"/>
</dbReference>
<dbReference type="InterPro" id="IPR005712">
    <property type="entry name" value="Ribosomal_uS5_bac-type"/>
</dbReference>
<dbReference type="InterPro" id="IPR005324">
    <property type="entry name" value="Ribosomal_uS5_C"/>
</dbReference>
<dbReference type="InterPro" id="IPR013810">
    <property type="entry name" value="Ribosomal_uS5_N"/>
</dbReference>
<dbReference type="InterPro" id="IPR018192">
    <property type="entry name" value="Ribosomal_uS5_N_CS"/>
</dbReference>
<dbReference type="InterPro" id="IPR014721">
    <property type="entry name" value="Ribsml_uS5_D2-typ_fold_subgr"/>
</dbReference>
<dbReference type="NCBIfam" id="TIGR01021">
    <property type="entry name" value="rpsE_bact"/>
    <property type="match status" value="1"/>
</dbReference>
<dbReference type="PANTHER" id="PTHR48277">
    <property type="entry name" value="MITOCHONDRIAL RIBOSOMAL PROTEIN S5"/>
    <property type="match status" value="1"/>
</dbReference>
<dbReference type="PANTHER" id="PTHR48277:SF1">
    <property type="entry name" value="MITOCHONDRIAL RIBOSOMAL PROTEIN S5"/>
    <property type="match status" value="1"/>
</dbReference>
<dbReference type="Pfam" id="PF00333">
    <property type="entry name" value="Ribosomal_S5"/>
    <property type="match status" value="1"/>
</dbReference>
<dbReference type="Pfam" id="PF03719">
    <property type="entry name" value="Ribosomal_S5_C"/>
    <property type="match status" value="1"/>
</dbReference>
<dbReference type="SUPFAM" id="SSF54768">
    <property type="entry name" value="dsRNA-binding domain-like"/>
    <property type="match status" value="1"/>
</dbReference>
<dbReference type="SUPFAM" id="SSF54211">
    <property type="entry name" value="Ribosomal protein S5 domain 2-like"/>
    <property type="match status" value="1"/>
</dbReference>
<dbReference type="PROSITE" id="PS00585">
    <property type="entry name" value="RIBOSOMAL_S5"/>
    <property type="match status" value="1"/>
</dbReference>
<dbReference type="PROSITE" id="PS50881">
    <property type="entry name" value="S5_DSRBD"/>
    <property type="match status" value="1"/>
</dbReference>
<reference key="1">
    <citation type="journal article" date="2001" name="Science">
        <title>Complete genome sequence of a virulent isolate of Streptococcus pneumoniae.</title>
        <authorList>
            <person name="Tettelin H."/>
            <person name="Nelson K.E."/>
            <person name="Paulsen I.T."/>
            <person name="Eisen J.A."/>
            <person name="Read T.D."/>
            <person name="Peterson S.N."/>
            <person name="Heidelberg J.F."/>
            <person name="DeBoy R.T."/>
            <person name="Haft D.H."/>
            <person name="Dodson R.J."/>
            <person name="Durkin A.S."/>
            <person name="Gwinn M.L."/>
            <person name="Kolonay J.F."/>
            <person name="Nelson W.C."/>
            <person name="Peterson J.D."/>
            <person name="Umayam L.A."/>
            <person name="White O."/>
            <person name="Salzberg S.L."/>
            <person name="Lewis M.R."/>
            <person name="Radune D."/>
            <person name="Holtzapple E.K."/>
            <person name="Khouri H.M."/>
            <person name="Wolf A.M."/>
            <person name="Utterback T.R."/>
            <person name="Hansen C.L."/>
            <person name="McDonald L.A."/>
            <person name="Feldblyum T.V."/>
            <person name="Angiuoli S.V."/>
            <person name="Dickinson T."/>
            <person name="Hickey E.K."/>
            <person name="Holt I.E."/>
            <person name="Loftus B.J."/>
            <person name="Yang F."/>
            <person name="Smith H.O."/>
            <person name="Venter J.C."/>
            <person name="Dougherty B.A."/>
            <person name="Morrison D.A."/>
            <person name="Hollingshead S.K."/>
            <person name="Fraser C.M."/>
        </authorList>
    </citation>
    <scope>NUCLEOTIDE SEQUENCE [LARGE SCALE GENOMIC DNA]</scope>
    <source>
        <strain>ATCC BAA-334 / TIGR4</strain>
    </source>
</reference>
<proteinExistence type="inferred from homology"/>
<name>RS5_STRPN</name>
<evidence type="ECO:0000255" key="1">
    <source>
        <dbReference type="HAMAP-Rule" id="MF_01307"/>
    </source>
</evidence>
<evidence type="ECO:0000305" key="2"/>
<keyword id="KW-1185">Reference proteome</keyword>
<keyword id="KW-0687">Ribonucleoprotein</keyword>
<keyword id="KW-0689">Ribosomal protein</keyword>
<keyword id="KW-0694">RNA-binding</keyword>
<keyword id="KW-0699">rRNA-binding</keyword>
<gene>
    <name evidence="1" type="primary">rpsE</name>
    <name type="ordered locus">SP_0227</name>
</gene>
<accession>P66581</accession>
<accession>Q97SU5</accession>
<feature type="chain" id="PRO_0000131606" description="Small ribosomal subunit protein uS5">
    <location>
        <begin position="1"/>
        <end position="164"/>
    </location>
</feature>
<feature type="domain" description="S5 DRBM" evidence="1">
    <location>
        <begin position="10"/>
        <end position="73"/>
    </location>
</feature>
<protein>
    <recommendedName>
        <fullName evidence="1">Small ribosomal subunit protein uS5</fullName>
    </recommendedName>
    <alternativeName>
        <fullName evidence="2">30S ribosomal protein S5</fullName>
    </alternativeName>
</protein>
<organism>
    <name type="scientific">Streptococcus pneumoniae serotype 4 (strain ATCC BAA-334 / TIGR4)</name>
    <dbReference type="NCBI Taxonomy" id="170187"/>
    <lineage>
        <taxon>Bacteria</taxon>
        <taxon>Bacillati</taxon>
        <taxon>Bacillota</taxon>
        <taxon>Bacilli</taxon>
        <taxon>Lactobacillales</taxon>
        <taxon>Streptococcaceae</taxon>
        <taxon>Streptococcus</taxon>
    </lineage>
</organism>
<comment type="function">
    <text evidence="1">With S4 and S12 plays an important role in translational accuracy.</text>
</comment>
<comment type="function">
    <text evidence="1">Located at the back of the 30S subunit body where it stabilizes the conformation of the head with respect to the body.</text>
</comment>
<comment type="subunit">
    <text evidence="1">Part of the 30S ribosomal subunit. Contacts proteins S4 and S8.</text>
</comment>
<comment type="domain">
    <text>The N-terminal domain interacts with the head of the 30S subunit; the C-terminal domain interacts with the body and contacts protein S4. The interaction surface between S4 and S5 is involved in control of translational fidelity.</text>
</comment>
<comment type="similarity">
    <text evidence="1">Belongs to the universal ribosomal protein uS5 family.</text>
</comment>